<protein>
    <recommendedName>
        <fullName evidence="1">Aspartate 1-decarboxylase</fullName>
        <ecNumber evidence="1">4.1.1.11</ecNumber>
    </recommendedName>
    <alternativeName>
        <fullName evidence="1">Aspartate alpha-decarboxylase</fullName>
    </alternativeName>
    <component>
        <recommendedName>
            <fullName evidence="1">Aspartate 1-decarboxylase beta chain</fullName>
        </recommendedName>
    </component>
    <component>
        <recommendedName>
            <fullName evidence="1">Aspartate 1-decarboxylase alpha chain</fullName>
        </recommendedName>
    </component>
</protein>
<accession>B1JWS9</accession>
<organism>
    <name type="scientific">Burkholderia orbicola (strain MC0-3)</name>
    <dbReference type="NCBI Taxonomy" id="406425"/>
    <lineage>
        <taxon>Bacteria</taxon>
        <taxon>Pseudomonadati</taxon>
        <taxon>Pseudomonadota</taxon>
        <taxon>Betaproteobacteria</taxon>
        <taxon>Burkholderiales</taxon>
        <taxon>Burkholderiaceae</taxon>
        <taxon>Burkholderia</taxon>
        <taxon>Burkholderia cepacia complex</taxon>
        <taxon>Burkholderia orbicola</taxon>
    </lineage>
</organism>
<keyword id="KW-0068">Autocatalytic cleavage</keyword>
<keyword id="KW-0963">Cytoplasm</keyword>
<keyword id="KW-0210">Decarboxylase</keyword>
<keyword id="KW-0456">Lyase</keyword>
<keyword id="KW-0566">Pantothenate biosynthesis</keyword>
<keyword id="KW-0670">Pyruvate</keyword>
<keyword id="KW-0704">Schiff base</keyword>
<keyword id="KW-0865">Zymogen</keyword>
<comment type="function">
    <text evidence="1">Catalyzes the pyruvoyl-dependent decarboxylation of aspartate to produce beta-alanine.</text>
</comment>
<comment type="catalytic activity">
    <reaction evidence="1">
        <text>L-aspartate + H(+) = beta-alanine + CO2</text>
        <dbReference type="Rhea" id="RHEA:19497"/>
        <dbReference type="ChEBI" id="CHEBI:15378"/>
        <dbReference type="ChEBI" id="CHEBI:16526"/>
        <dbReference type="ChEBI" id="CHEBI:29991"/>
        <dbReference type="ChEBI" id="CHEBI:57966"/>
        <dbReference type="EC" id="4.1.1.11"/>
    </reaction>
</comment>
<comment type="cofactor">
    <cofactor evidence="1">
        <name>pyruvate</name>
        <dbReference type="ChEBI" id="CHEBI:15361"/>
    </cofactor>
    <text evidence="1">Binds 1 pyruvoyl group covalently per subunit.</text>
</comment>
<comment type="pathway">
    <text evidence="1">Cofactor biosynthesis; (R)-pantothenate biosynthesis; beta-alanine from L-aspartate: step 1/1.</text>
</comment>
<comment type="subunit">
    <text evidence="1">Heterooctamer of four alpha and four beta subunits.</text>
</comment>
<comment type="subcellular location">
    <subcellularLocation>
        <location evidence="1">Cytoplasm</location>
    </subcellularLocation>
</comment>
<comment type="PTM">
    <text evidence="1">Is synthesized initially as an inactive proenzyme, which is activated by self-cleavage at a specific serine bond to produce a beta-subunit with a hydroxyl group at its C-terminus and an alpha-subunit with a pyruvoyl group at its N-terminus.</text>
</comment>
<comment type="similarity">
    <text evidence="1">Belongs to the PanD family.</text>
</comment>
<feature type="chain" id="PRO_1000191932" description="Aspartate 1-decarboxylase beta chain" evidence="1">
    <location>
        <begin position="1"/>
        <end position="24"/>
    </location>
</feature>
<feature type="chain" id="PRO_1000191933" description="Aspartate 1-decarboxylase alpha chain" evidence="1">
    <location>
        <begin position="25"/>
        <end position="128"/>
    </location>
</feature>
<feature type="active site" description="Schiff-base intermediate with substrate; via pyruvic acid" evidence="1">
    <location>
        <position position="25"/>
    </location>
</feature>
<feature type="active site" description="Proton donor" evidence="1">
    <location>
        <position position="58"/>
    </location>
</feature>
<feature type="binding site" evidence="1">
    <location>
        <position position="57"/>
    </location>
    <ligand>
        <name>substrate</name>
    </ligand>
</feature>
<feature type="binding site" evidence="1">
    <location>
        <begin position="73"/>
        <end position="75"/>
    </location>
    <ligand>
        <name>substrate</name>
    </ligand>
</feature>
<feature type="modified residue" description="Pyruvic acid (Ser)" evidence="1">
    <location>
        <position position="25"/>
    </location>
</feature>
<gene>
    <name evidence="1" type="primary">panD</name>
    <name type="ordered locus">Bcenmc03_2448</name>
</gene>
<dbReference type="EC" id="4.1.1.11" evidence="1"/>
<dbReference type="EMBL" id="CP000958">
    <property type="protein sequence ID" value="ACA91609.1"/>
    <property type="molecule type" value="Genomic_DNA"/>
</dbReference>
<dbReference type="RefSeq" id="WP_011545962.1">
    <property type="nucleotide sequence ID" value="NC_010508.1"/>
</dbReference>
<dbReference type="SMR" id="B1JWS9"/>
<dbReference type="GeneID" id="83049238"/>
<dbReference type="KEGG" id="bcm:Bcenmc03_2448"/>
<dbReference type="HOGENOM" id="CLU_115305_2_1_4"/>
<dbReference type="UniPathway" id="UPA00028">
    <property type="reaction ID" value="UER00002"/>
</dbReference>
<dbReference type="Proteomes" id="UP000002169">
    <property type="component" value="Chromosome 1"/>
</dbReference>
<dbReference type="GO" id="GO:0005829">
    <property type="term" value="C:cytosol"/>
    <property type="evidence" value="ECO:0007669"/>
    <property type="project" value="TreeGrafter"/>
</dbReference>
<dbReference type="GO" id="GO:0004068">
    <property type="term" value="F:aspartate 1-decarboxylase activity"/>
    <property type="evidence" value="ECO:0007669"/>
    <property type="project" value="UniProtKB-UniRule"/>
</dbReference>
<dbReference type="GO" id="GO:0006523">
    <property type="term" value="P:alanine biosynthetic process"/>
    <property type="evidence" value="ECO:0007669"/>
    <property type="project" value="InterPro"/>
</dbReference>
<dbReference type="GO" id="GO:0015940">
    <property type="term" value="P:pantothenate biosynthetic process"/>
    <property type="evidence" value="ECO:0007669"/>
    <property type="project" value="UniProtKB-UniRule"/>
</dbReference>
<dbReference type="CDD" id="cd06919">
    <property type="entry name" value="Asp_decarbox"/>
    <property type="match status" value="1"/>
</dbReference>
<dbReference type="Gene3D" id="2.40.40.20">
    <property type="match status" value="1"/>
</dbReference>
<dbReference type="HAMAP" id="MF_00446">
    <property type="entry name" value="PanD"/>
    <property type="match status" value="1"/>
</dbReference>
<dbReference type="InterPro" id="IPR009010">
    <property type="entry name" value="Asp_de-COase-like_dom_sf"/>
</dbReference>
<dbReference type="InterPro" id="IPR003190">
    <property type="entry name" value="Asp_decarbox"/>
</dbReference>
<dbReference type="NCBIfam" id="TIGR00223">
    <property type="entry name" value="panD"/>
    <property type="match status" value="1"/>
</dbReference>
<dbReference type="PANTHER" id="PTHR21012">
    <property type="entry name" value="ASPARTATE 1-DECARBOXYLASE"/>
    <property type="match status" value="1"/>
</dbReference>
<dbReference type="PANTHER" id="PTHR21012:SF0">
    <property type="entry name" value="ASPARTATE 1-DECARBOXYLASE"/>
    <property type="match status" value="1"/>
</dbReference>
<dbReference type="Pfam" id="PF02261">
    <property type="entry name" value="Asp_decarbox"/>
    <property type="match status" value="1"/>
</dbReference>
<dbReference type="PIRSF" id="PIRSF006246">
    <property type="entry name" value="Asp_decarbox"/>
    <property type="match status" value="1"/>
</dbReference>
<dbReference type="SUPFAM" id="SSF50692">
    <property type="entry name" value="ADC-like"/>
    <property type="match status" value="1"/>
</dbReference>
<sequence>MQRHMLKSKIHRAAVTHCELHYEGSCAIDEDLLEAAGLIENERIDIWNINNGERFSTYAIKGERGSGMISLNGSAARRAQLGDLVIIAAFAMVDEAELQAGWKPKLVFIDDGNKIKGHRDHVPTQNWT</sequence>
<evidence type="ECO:0000255" key="1">
    <source>
        <dbReference type="HAMAP-Rule" id="MF_00446"/>
    </source>
</evidence>
<name>PAND_BURO0</name>
<proteinExistence type="inferred from homology"/>
<reference key="1">
    <citation type="submission" date="2008-02" db="EMBL/GenBank/DDBJ databases">
        <title>Complete sequence of chromosome 1 of Burkholderia cenocepacia MC0-3.</title>
        <authorList>
            <person name="Copeland A."/>
            <person name="Lucas S."/>
            <person name="Lapidus A."/>
            <person name="Barry K."/>
            <person name="Bruce D."/>
            <person name="Goodwin L."/>
            <person name="Glavina del Rio T."/>
            <person name="Dalin E."/>
            <person name="Tice H."/>
            <person name="Pitluck S."/>
            <person name="Chain P."/>
            <person name="Malfatti S."/>
            <person name="Shin M."/>
            <person name="Vergez L."/>
            <person name="Schmutz J."/>
            <person name="Larimer F."/>
            <person name="Land M."/>
            <person name="Hauser L."/>
            <person name="Kyrpides N."/>
            <person name="Mikhailova N."/>
            <person name="Tiedje J."/>
            <person name="Richardson P."/>
        </authorList>
    </citation>
    <scope>NUCLEOTIDE SEQUENCE [LARGE SCALE GENOMIC DNA]</scope>
    <source>
        <strain>MC0-3</strain>
    </source>
</reference>